<name>Y544_METTH</name>
<keyword id="KW-1185">Reference proteome</keyword>
<protein>
    <recommendedName>
        <fullName>UPF0145 protein MTH_544</fullName>
    </recommendedName>
</protein>
<reference key="1">
    <citation type="journal article" date="1997" name="J. Bacteriol.">
        <title>Complete genome sequence of Methanobacterium thermoautotrophicum deltaH: functional analysis and comparative genomics.</title>
        <authorList>
            <person name="Smith D.R."/>
            <person name="Doucette-Stamm L.A."/>
            <person name="Deloughery C."/>
            <person name="Lee H.-M."/>
            <person name="Dubois J."/>
            <person name="Aldredge T."/>
            <person name="Bashirzadeh R."/>
            <person name="Blakely D."/>
            <person name="Cook R."/>
            <person name="Gilbert K."/>
            <person name="Harrison D."/>
            <person name="Hoang L."/>
            <person name="Keagle P."/>
            <person name="Lumm W."/>
            <person name="Pothier B."/>
            <person name="Qiu D."/>
            <person name="Spadafora R."/>
            <person name="Vicare R."/>
            <person name="Wang Y."/>
            <person name="Wierzbowski J."/>
            <person name="Gibson R."/>
            <person name="Jiwani N."/>
            <person name="Caruso A."/>
            <person name="Bush D."/>
            <person name="Safer H."/>
            <person name="Patwell D."/>
            <person name="Prabhakar S."/>
            <person name="McDougall S."/>
            <person name="Shimer G."/>
            <person name="Goyal A."/>
            <person name="Pietrovski S."/>
            <person name="Church G.M."/>
            <person name="Daniels C.J."/>
            <person name="Mao J.-I."/>
            <person name="Rice P."/>
            <person name="Noelling J."/>
            <person name="Reeve J.N."/>
        </authorList>
    </citation>
    <scope>NUCLEOTIDE SEQUENCE [LARGE SCALE GENOMIC DNA]</scope>
    <source>
        <strain>ATCC 29096 / DSM 1053 / JCM 10044 / NBRC 100330 / Delta H</strain>
    </source>
</reference>
<evidence type="ECO:0000305" key="1"/>
<dbReference type="EMBL" id="AE000666">
    <property type="protein sequence ID" value="AAB85050.1"/>
    <property type="status" value="ALT_INIT"/>
    <property type="molecule type" value="Genomic_DNA"/>
</dbReference>
<dbReference type="PIR" id="H69171">
    <property type="entry name" value="H69171"/>
</dbReference>
<dbReference type="RefSeq" id="WP_048061225.1">
    <property type="nucleotide sequence ID" value="NC_000916.1"/>
</dbReference>
<dbReference type="SMR" id="O26644"/>
<dbReference type="STRING" id="187420.MTH_544"/>
<dbReference type="PaxDb" id="187420-MTH_544"/>
<dbReference type="EnsemblBacteria" id="AAB85050">
    <property type="protein sequence ID" value="AAB85050"/>
    <property type="gene ID" value="MTH_544"/>
</dbReference>
<dbReference type="GeneID" id="1470505"/>
<dbReference type="KEGG" id="mth:MTH_544"/>
<dbReference type="PATRIC" id="fig|187420.15.peg.524"/>
<dbReference type="HOGENOM" id="CLU_117144_1_1_2"/>
<dbReference type="InParanoid" id="O26644"/>
<dbReference type="Proteomes" id="UP000005223">
    <property type="component" value="Chromosome"/>
</dbReference>
<dbReference type="Gene3D" id="3.30.110.70">
    <property type="entry name" value="Hypothetical protein apc22750. Chain B"/>
    <property type="match status" value="1"/>
</dbReference>
<dbReference type="HAMAP" id="MF_00338">
    <property type="entry name" value="UPF0145"/>
    <property type="match status" value="1"/>
</dbReference>
<dbReference type="InterPro" id="IPR035439">
    <property type="entry name" value="UPF0145_dom_sf"/>
</dbReference>
<dbReference type="InterPro" id="IPR002765">
    <property type="entry name" value="UPF0145_YbjQ-like"/>
</dbReference>
<dbReference type="PANTHER" id="PTHR34068:SF2">
    <property type="entry name" value="UPF0145 PROTEIN SCO3412"/>
    <property type="match status" value="1"/>
</dbReference>
<dbReference type="PANTHER" id="PTHR34068">
    <property type="entry name" value="UPF0145 PROTEIN YBJQ"/>
    <property type="match status" value="1"/>
</dbReference>
<dbReference type="Pfam" id="PF01906">
    <property type="entry name" value="YbjQ_1"/>
    <property type="match status" value="1"/>
</dbReference>
<dbReference type="SUPFAM" id="SSF117782">
    <property type="entry name" value="YbjQ-like"/>
    <property type="match status" value="1"/>
</dbReference>
<feature type="chain" id="PRO_0000138497" description="UPF0145 protein MTH_544">
    <location>
        <begin position="1"/>
        <end position="113"/>
    </location>
</feature>
<sequence length="113" mass="12825">MVEEHRDVIYVTSNYVPGYRAVEVLGFVYGLTVRSRRLGGQIDRFKSILGGEIKEYVTMMEHSRQEALERMLDHARELGANAVISVRFDSDSISDIMQEILAYGTAVIVEPEE</sequence>
<gene>
    <name type="ordered locus">MTH_544</name>
</gene>
<accession>O26644</accession>
<proteinExistence type="inferred from homology"/>
<comment type="similarity">
    <text evidence="1">Belongs to the UPF0145 family.</text>
</comment>
<comment type="sequence caution" evidence="1">
    <conflict type="erroneous initiation">
        <sequence resource="EMBL-CDS" id="AAB85050"/>
    </conflict>
</comment>
<organism>
    <name type="scientific">Methanothermobacter thermautotrophicus (strain ATCC 29096 / DSM 1053 / JCM 10044 / NBRC 100330 / Delta H)</name>
    <name type="common">Methanobacterium thermoautotrophicum</name>
    <dbReference type="NCBI Taxonomy" id="187420"/>
    <lineage>
        <taxon>Archaea</taxon>
        <taxon>Methanobacteriati</taxon>
        <taxon>Methanobacteriota</taxon>
        <taxon>Methanomada group</taxon>
        <taxon>Methanobacteria</taxon>
        <taxon>Methanobacteriales</taxon>
        <taxon>Methanobacteriaceae</taxon>
        <taxon>Methanothermobacter</taxon>
    </lineage>
</organism>